<accession>P01833</accession>
<accession>Q68D81</accession>
<accession>Q8IZY7</accession>
<comment type="function">
    <molecule>Polymeric immunoglobulin receptor</molecule>
    <text evidence="6 10 26">Mediates selective transcytosis of polymeric IgA and IgM across mucosal epithelial cells. Binds polymeric IgA and IgM at the basolateral surface of epithelial cells. The complex is then transported across the cell to be secreted at the apical surface. During this process, a cleavage occurs that separates the extracellular (known as the secretory component) from the transmembrane segment.</text>
</comment>
<comment type="function">
    <molecule>Secretory component</molecule>
    <text evidence="7 12">Through its N-linked glycans ensures anchoring of secretory IgA (sIgA) molecules to mucus lining the epithelial surface to neutralize extracellular pathogens (PubMed:12150896). On its own (free form) may act as a non-specific microbial scavenger to prevent pathogen interaction with epithelial cells (PubMed:16543244).</text>
</comment>
<comment type="subunit">
    <text evidence="6 10">Interacts (mainly via CDR1-like domain) with dimeric IgA (PubMed:15530357). Interacts (mainly via CDR2-like domain) with pentameric IgM (PubMed:10229845, PubMed:32029689).</text>
</comment>
<comment type="subunit">
    <molecule>Secretory component</molecule>
    <text evidence="12 18 22 25">Either free or part of the secretory IgA (sIgA) complex that consists of two, four or five IgA monomers, and two additional non-Ig polypeptides, namely the JCHAIN and the secretory component (the proteolytic product of PIGR) (PubMed:16543244, PubMed:19079336, PubMed:32029686, PubMed:8292260). Free secretory component interacts with bacterial antigens toxA of C.difficile and eaeA of E.coli (PubMed:16543244).</text>
</comment>
<comment type="subcellular location">
    <molecule>Polymeric immunoglobulin receptor</molecule>
    <subcellularLocation>
        <location evidence="26">Cell membrane</location>
        <topology evidence="3">Single-pass type I membrane protein</topology>
    </subcellularLocation>
</comment>
<comment type="subcellular location">
    <molecule>Secretory component</molecule>
    <subcellularLocation>
        <location evidence="12 18 25">Secreted</location>
    </subcellularLocation>
</comment>
<comment type="domain">
    <text evidence="6 10 23">The Ig-like V-type 1/D1 domain contains three complementarity determining region-like loops CDR1-3, which mediate interaction with IgA and IgM.</text>
</comment>
<comment type="PTM">
    <text evidence="7 9 11 12 13 17 19 20 24">N-glycosylated. N-glycosylation is required for anchoring IgA molecules to mucus, but is not necessary for Ig binding.</text>
</comment>
<reference key="1">
    <citation type="journal article" date="1991" name="Hum. Genet.">
        <title>The human transmembrane secretory component (poly-Ig receptor): molecular cloning, restriction fragment length polymorphism and chromosomal sublocalization.</title>
        <authorList>
            <person name="Krajci P."/>
            <person name="Grzeschik K.H."/>
            <person name="Geurts van Kessel A.H."/>
            <person name="Olaisen B."/>
            <person name="Brandtzaeg P."/>
        </authorList>
    </citation>
    <scope>NUCLEOTIDE SEQUENCE [MRNA]</scope>
    <scope>VARIANT SER-365</scope>
</reference>
<reference key="2">
    <citation type="journal article" date="1992" name="Eur. J. Immunol.">
        <title>Molecular cloning and exon-intron mapping of the gene encoding human transmembrane secretory component (the poly-Ig receptor).</title>
        <authorList>
            <person name="Krajci P."/>
            <person name="Kvale D."/>
            <person name="Tasken K."/>
            <person name="Brandtzaeg P."/>
        </authorList>
    </citation>
    <scope>NUCLEOTIDE SEQUENCE [GENOMIC DNA]</scope>
    <scope>VARIANT SER-365</scope>
</reference>
<reference key="3">
    <citation type="submission" date="2002-11" db="EMBL/GenBank/DDBJ databases">
        <title>Cloning and characterization of hepatocellular carcinoma associated-genes.</title>
        <authorList>
            <person name="Dong X."/>
            <person name="Pang X."/>
            <person name="Cheng W."/>
        </authorList>
    </citation>
    <scope>NUCLEOTIDE SEQUENCE [MRNA]</scope>
</reference>
<reference key="4">
    <citation type="journal article" date="2007" name="BMC Genomics">
        <title>The full-ORF clone resource of the German cDNA consortium.</title>
        <authorList>
            <person name="Bechtel S."/>
            <person name="Rosenfelder H."/>
            <person name="Duda A."/>
            <person name="Schmidt C.P."/>
            <person name="Ernst U."/>
            <person name="Wellenreuther R."/>
            <person name="Mehrle A."/>
            <person name="Schuster C."/>
            <person name="Bahr A."/>
            <person name="Bloecker H."/>
            <person name="Heubner D."/>
            <person name="Hoerlein A."/>
            <person name="Michel G."/>
            <person name="Wedler H."/>
            <person name="Koehrer K."/>
            <person name="Ottenwaelder B."/>
            <person name="Poustka A."/>
            <person name="Wiemann S."/>
            <person name="Schupp I."/>
        </authorList>
    </citation>
    <scope>NUCLEOTIDE SEQUENCE [LARGE SCALE MRNA]</scope>
    <scope>VARIANT SER-365</scope>
    <source>
        <tissue>Small intestine</tissue>
    </source>
</reference>
<reference key="5">
    <citation type="journal article" date="1989" name="Biochem. Biophys. Res. Commun.">
        <title>Molecular cloning of the human transmembrane secretory component (poly-Ig receptor) and its mRNA expression in human tissues.</title>
        <authorList>
            <person name="Krajci P."/>
            <person name="Solberg R."/>
            <person name="Sandberg M."/>
            <person name="Oyen O."/>
            <person name="Jahnsen T."/>
            <person name="Brandtzaeg P."/>
        </authorList>
    </citation>
    <scope>NUCLEOTIDE SEQUENCE [MRNA] OF 72-764</scope>
    <scope>VARIANT SER-365</scope>
</reference>
<reference key="6">
    <citation type="journal article" date="1984" name="Hoppe-Seyler's Z. Physiol. Chem.">
        <title>The primary structure of human free secretory component and the arrangement of disulfide bonds.</title>
        <authorList>
            <person name="Eiffert H."/>
            <person name="Quentin E."/>
            <person name="Decker J."/>
            <person name="Hillemeir S."/>
            <person name="Hufschmidt M."/>
            <person name="Klingmueller D."/>
            <person name="Weber M.H."/>
            <person name="Hilschmann N."/>
        </authorList>
    </citation>
    <scope>PROTEIN SEQUENCE OF 19-577</scope>
    <scope>VARIANT SER-365</scope>
    <scope>DISULFIDE BONDS</scope>
    <scope>GLYCOSYLATION AT ASN-83; ASN-90; ASN-135; ASN-186; ASN-421; ASN-469 AND ASN-499</scope>
</reference>
<reference key="7">
    <citation type="journal article" date="1991" name="Biol. Chem. Hoppe-Seyler">
        <title>Determination of the molecular structure of the human free secretory component.</title>
        <authorList>
            <person name="Eiffert H."/>
            <person name="Quentin E."/>
            <person name="Wiederhold M."/>
            <person name="Hillemeir S."/>
            <person name="Decker J."/>
            <person name="Weber M."/>
            <person name="Hilschmann N."/>
        </authorList>
    </citation>
    <scope>PROTEIN SEQUENCE OF 19-577</scope>
    <scope>VARIANT SER-365</scope>
</reference>
<reference key="8">
    <citation type="journal article" date="1993" name="Biol. Chem. Hoppe-Seyler">
        <title>The covalent linkage of secretory component to IgA. Structure of sIgA.</title>
        <authorList>
            <person name="Fallgreen-Gebauer E."/>
            <person name="Gebauer W."/>
            <person name="Bastian A."/>
            <person name="Kratzin H.D."/>
            <person name="Eiffert H."/>
            <person name="Zimmermann B."/>
            <person name="Karas M."/>
            <person name="Hilschmann N."/>
        </authorList>
    </citation>
    <scope>SUBUNIT (SECRETORY COMPONENT)</scope>
    <scope>SUBCELLULAR LOCATION (SECRETORY COMPONENT)</scope>
    <scope>DISULFIDE BOND</scope>
</reference>
<reference key="9">
    <citation type="journal article" date="1997" name="FEBS Lett.">
        <title>Human free secretory component is composed of the first 585 amino acid residues of the polymeric immunoglobulin receptor.</title>
        <authorList>
            <person name="Hughes G.J."/>
            <person name="Frutiger S."/>
            <person name="Savoy L.-A."/>
            <person name="Reason A.J."/>
            <person name="Morris H.R."/>
            <person name="Jaton J.-C."/>
        </authorList>
    </citation>
    <scope>PROTEIN SEQUENCE OF 118-138; 212-230; 232-268; 273-288 AND 578-603</scope>
</reference>
<reference key="10">
    <citation type="journal article" date="1997" name="J. Immunol.">
        <title>Mechanism for enhanced external transfer of dimeric IgA over pentameric IgM: studies of diffusion, binding to the human polymeric Ig receptor, and epithelial transcytosis.</title>
        <authorList>
            <person name="Natvig I.B."/>
            <person name="Johansen F.E."/>
            <person name="Nordeng T.W."/>
            <person name="Haraldsen G."/>
            <person name="Brandtzaeg P."/>
        </authorList>
    </citation>
    <scope>FUNCTION (POLYMERIC IMMUNOGLOBULIN RECEPTOR)</scope>
    <scope>SUBCELLULAR LOCATION (POLYMERIC IMMUNOGLOBULIN RECEPTOR)</scope>
</reference>
<reference key="11">
    <citation type="journal article" date="1999" name="J. Immunol.">
        <title>Fine specificity of ligand-binding domain 1 in the polymeric Ig receptor: importance of the CDR2-containing region for IgM interaction.</title>
        <authorList>
            <person name="Roee M."/>
            <person name="Norderhaug I.N."/>
            <person name="Brandtzaeg P."/>
            <person name="Johansen F.E."/>
        </authorList>
    </citation>
    <scope>FUNCTION (POLYMERIC IMMUNOGLOBULIN RECEPTOR)</scope>
    <scope>SUBUNIT</scope>
    <scope>DOMAIN</scope>
</reference>
<reference key="12">
    <citation type="journal article" date="2002" name="Immunity">
        <title>Secretory component: a new role in secretory IgA-mediated immune exclusion in vivo.</title>
        <authorList>
            <person name="Phalipon A."/>
            <person name="Cardona A."/>
            <person name="Kraehenbuhl J.P."/>
            <person name="Edelman L."/>
            <person name="Sansonetti P.J."/>
            <person name="Corthesy B."/>
        </authorList>
    </citation>
    <scope>FUNCTION (SECRETORY COMPONENT)</scope>
    <scope>GLYCOSYLATION</scope>
</reference>
<reference key="13">
    <citation type="journal article" date="2004" name="Mol. Cell. Proteomics">
        <title>A proteomic analysis of human bile.</title>
        <authorList>
            <person name="Kristiansen T.Z."/>
            <person name="Bunkenborg J."/>
            <person name="Gronborg M."/>
            <person name="Molina H."/>
            <person name="Thuluvath P.J."/>
            <person name="Argani P."/>
            <person name="Goggins M.G."/>
            <person name="Maitra A."/>
            <person name="Pandey A."/>
        </authorList>
    </citation>
    <scope>GLYCOSYLATION [LARGE SCALE ANALYSIS] AT ASN-83; ASN-90; ASN-421 AND ASN-469</scope>
    <source>
        <tissue>Bile</tissue>
    </source>
</reference>
<reference key="14">
    <citation type="journal article" date="2005" name="J. Proteome Res.">
        <title>Human plasma N-glycoproteome analysis by immunoaffinity subtraction, hydrazide chemistry, and mass spectrometry.</title>
        <authorList>
            <person name="Liu T."/>
            <person name="Qian W.-J."/>
            <person name="Gritsenko M.A."/>
            <person name="Camp D.G. II"/>
            <person name="Monroe M.E."/>
            <person name="Moore R.J."/>
            <person name="Smith R.D."/>
        </authorList>
    </citation>
    <scope>GLYCOSYLATION [LARGE SCALE ANALYSIS] AT ASN-90; ASN-421 AND ASN-469</scope>
    <source>
        <tissue>Plasma</tissue>
    </source>
</reference>
<reference key="15">
    <citation type="journal article" date="2006" name="J. Proteome Res.">
        <title>Identification of N-linked glycoproteins in human saliva by glycoprotein capture and mass spectrometry.</title>
        <authorList>
            <person name="Ramachandran P."/>
            <person name="Boontheung P."/>
            <person name="Xie Y."/>
            <person name="Sondej M."/>
            <person name="Wong D.T."/>
            <person name="Loo J.A."/>
        </authorList>
    </citation>
    <scope>GLYCOSYLATION [LARGE SCALE ANALYSIS] AT ASN-83; ASN-90; ASN-186; ASN-421; ASN-469 AND ASN-499</scope>
    <source>
        <tissue>Saliva</tissue>
    </source>
</reference>
<reference key="16">
    <citation type="journal article" date="2006" name="J. Biol. Chem.">
        <title>Glycans on secretory component participate in innate protection against mucosal pathogens.</title>
        <authorList>
            <person name="Perrier C."/>
            <person name="Sprenger N."/>
            <person name="Corthesy B."/>
        </authorList>
    </citation>
    <scope>FUNCTION (SECRETORY COMPONENT)</scope>
    <scope>SUBCELLULAR LOCATION (SECRETORY COMPONENT)</scope>
    <scope>SUBUNIT (SECRETORY COMPONENT)</scope>
    <scope>GLYCOSYLATION</scope>
</reference>
<reference key="17">
    <citation type="journal article" date="2008" name="Proteomics">
        <title>Identification of N-linked glycoproteins in human milk by hydrophilic interaction liquid chromatography and mass spectrometry.</title>
        <authorList>
            <person name="Picariello G."/>
            <person name="Ferranti P."/>
            <person name="Mamone G."/>
            <person name="Roepstorff P."/>
            <person name="Addeo F."/>
        </authorList>
    </citation>
    <scope>GLYCOSYLATION [LARGE SCALE ANALYSIS] AT ASN-83; ASN-90; ASN-135; ASN-186; ASN-421; ASN-469 AND ASN-499</scope>
    <source>
        <tissue>Milk</tissue>
    </source>
</reference>
<reference key="18">
    <citation type="journal article" date="2009" name="J. Proteome Res.">
        <title>Glycoproteomics analysis of human liver tissue by combination of multiple enzyme digestion and hydrazide chemistry.</title>
        <authorList>
            <person name="Chen R."/>
            <person name="Jiang X."/>
            <person name="Sun D."/>
            <person name="Han G."/>
            <person name="Wang F."/>
            <person name="Ye M."/>
            <person name="Wang L."/>
            <person name="Zou H."/>
        </authorList>
    </citation>
    <scope>GLYCOSYLATION [LARGE SCALE ANALYSIS] AT ASN-421 AND ASN-469</scope>
    <source>
        <tissue>Liver</tissue>
    </source>
</reference>
<reference key="19">
    <citation type="journal article" date="2009" name="Mol. Cell. Proteomics">
        <title>A strategy for precise and large scale identification of core fucosylated glycoproteins.</title>
        <authorList>
            <person name="Jia W."/>
            <person name="Lu Z."/>
            <person name="Fu Y."/>
            <person name="Wang H.P."/>
            <person name="Wang L.H."/>
            <person name="Chi H."/>
            <person name="Yuan Z.F."/>
            <person name="Zheng Z.B."/>
            <person name="Song L.N."/>
            <person name="Han H.H."/>
            <person name="Liang Y.M."/>
            <person name="Wang J.L."/>
            <person name="Cai Y."/>
            <person name="Zhang Y.K."/>
            <person name="Deng Y.L."/>
            <person name="Ying W.T."/>
            <person name="He S.M."/>
            <person name="Qian X.H."/>
        </authorList>
    </citation>
    <scope>GLYCOSYLATION AT ASN-469</scope>
</reference>
<reference key="20">
    <citation type="journal article" date="2011" name="BMC Syst. Biol.">
        <title>Initial characterization of the human central proteome.</title>
        <authorList>
            <person name="Burkard T.R."/>
            <person name="Planyavsky M."/>
            <person name="Kaupe I."/>
            <person name="Breitwieser F.P."/>
            <person name="Buerckstuemmer T."/>
            <person name="Bennett K.L."/>
            <person name="Superti-Furga G."/>
            <person name="Colinge J."/>
        </authorList>
    </citation>
    <scope>IDENTIFICATION BY MASS SPECTROMETRY [LARGE SCALE ANALYSIS]</scope>
</reference>
<reference key="21">
    <citation type="journal article" date="2015" name="Proteomics">
        <title>N-terminome analysis of the human mitochondrial proteome.</title>
        <authorList>
            <person name="Vaca Jacome A.S."/>
            <person name="Rabilloud T."/>
            <person name="Schaeffer-Reiss C."/>
            <person name="Rompais M."/>
            <person name="Ayoub D."/>
            <person name="Lane L."/>
            <person name="Bairoch A."/>
            <person name="Van Dorsselaer A."/>
            <person name="Carapito C."/>
        </authorList>
    </citation>
    <scope>IDENTIFICATION BY MASS SPECTROMETRY [LARGE SCALE ANALYSIS]</scope>
</reference>
<reference key="22">
    <citation type="journal article" date="2015" name="J. Proteome Res.">
        <title>Human basal tear peptidome characterization by CID, HCD, and ETD followed by in silico and in vitro analyses for antimicrobial peptide identification.</title>
        <authorList>
            <person name="Azkargorta M."/>
            <person name="Soria J."/>
            <person name="Ojeda C."/>
            <person name="Guzman F."/>
            <person name="Acera A."/>
            <person name="Iloro I."/>
            <person name="Suarez T."/>
            <person name="Elortza F."/>
        </authorList>
    </citation>
    <scope>PROTEIN SEQUENCE OF 573-648</scope>
    <scope>IDENTIFICATION BY MASS SPECTROMETRY</scope>
    <source>
        <tissue>Tear</tissue>
    </source>
</reference>
<reference key="23">
    <citation type="journal article" date="2004" name="Structure">
        <title>Crystal structure of a polymeric immunoglobulin binding fragment of the human polymeric immunoglobulin receptor.</title>
        <authorList>
            <person name="Hamburger A.E."/>
            <person name="West A.P. Jr."/>
            <person name="Bjorkman P.J."/>
        </authorList>
    </citation>
    <scope>X-RAY CRYSTALLOGRAPHY (1.9 ANGSTROMS) OF 19-127</scope>
    <scope>FUNCTION (POLYMERIC IMMUNOGLOBULIN RECEPTOR)</scope>
    <scope>SUBUNIT</scope>
    <scope>DOMAIN</scope>
</reference>
<reference key="24">
    <citation type="journal article" date="2009" name="Mucosal Immunol.">
        <title>Location of secretory component on the Fc edge of dimeric IgA1 reveals insight into the role of secretory IgA1 in mucosal immunity.</title>
        <authorList>
            <person name="Bonner A."/>
            <person name="Almogren A."/>
            <person name="Furtado P.B."/>
            <person name="Kerr M.A."/>
            <person name="Perkins S.J."/>
        </authorList>
    </citation>
    <scope>STRUCTURE BY NMR OF 353-458 AND 19-603</scope>
    <scope>SUBUNIT (SECRETORY COMPONENT)</scope>
    <scope>SUBCELLULAR LOCATION (SECRETORY COMPONENT)</scope>
</reference>
<reference key="25">
    <citation type="journal article" date="2020" name="Science">
        <title>Structure of the secretory immunoglobulin A core.</title>
        <authorList>
            <person name="Kumar N."/>
            <person name="Arthur C.P."/>
            <person name="Ciferri C."/>
            <person name="Matsumoto M.L."/>
        </authorList>
    </citation>
    <scope>STRUCTURE BY ELECTRON MICROSCOPY (2.90 ANGSTROMS) OF 19-603 IN COMPLEX WITH JCHAIN AND IGHA1 OR IGHA2</scope>
    <scope>SUBUNIT (SECRETORY COMPONENT)</scope>
    <scope>SUBCELLULAR LOCATION (SECRETORY COMPONENT)</scope>
    <scope>DISULFIDE BOND</scope>
</reference>
<reference key="26">
    <citation type="journal article" date="2020" name="Science">
        <title>Structural insights into immunoglobulin M.</title>
        <authorList>
            <person name="Li Y."/>
            <person name="Wang G."/>
            <person name="Li N."/>
            <person name="Wang Y."/>
            <person name="Zhu Q."/>
            <person name="Chu H."/>
            <person name="Wu W."/>
            <person name="Tan Y."/>
            <person name="Tan Y."/>
            <person name="Yu F."/>
            <person name="Su X.D."/>
            <person name="Gao N."/>
            <person name="Xiao J."/>
        </authorList>
    </citation>
    <scope>STRUCTURE BY ELECTRON MICROSCOPY (3.40 ANGSTROMS) OF 19-565 IN COMPLEX WITH PENTAMERIC IGM</scope>
    <scope>DISULFIDE BONDS</scope>
    <scope>DOMAIN</scope>
    <scope>MUTAGENESIS OF VAL-47; ARG-49; ARG-117 AND LEU-119</scope>
</reference>
<protein>
    <recommendedName>
        <fullName>Polymeric immunoglobulin receptor</fullName>
        <shortName>PIgR</shortName>
        <shortName>Poly-Ig receptor</shortName>
    </recommendedName>
    <alternativeName>
        <fullName>Hepatocellular carcinoma-associated protein TB6</fullName>
    </alternativeName>
    <component>
        <recommendedName>
            <fullName>Secretory component</fullName>
        </recommendedName>
    </component>
</protein>
<gene>
    <name type="primary">PIGR</name>
</gene>
<organism>
    <name type="scientific">Homo sapiens</name>
    <name type="common">Human</name>
    <dbReference type="NCBI Taxonomy" id="9606"/>
    <lineage>
        <taxon>Eukaryota</taxon>
        <taxon>Metazoa</taxon>
        <taxon>Chordata</taxon>
        <taxon>Craniata</taxon>
        <taxon>Vertebrata</taxon>
        <taxon>Euteleostomi</taxon>
        <taxon>Mammalia</taxon>
        <taxon>Eutheria</taxon>
        <taxon>Euarchontoglires</taxon>
        <taxon>Primates</taxon>
        <taxon>Haplorrhini</taxon>
        <taxon>Catarrhini</taxon>
        <taxon>Hominidae</taxon>
        <taxon>Homo</taxon>
    </lineage>
</organism>
<sequence>MLLFVLTCLLAVFPAISTKSPIFGPEEVNSVEGNSVSITCYYPPTSVNRHTRKYWCRQGARGGCITLISSEGYVSSKYAGRANLTNFPENGTFVVNIAQLSQDDSGRYKCGLGINSRGLSFDVSLEVSQGPGLLNDTKVYTVDLGRTVTINCPFKTENAQKRKSLYKQIGLYPVLVIDSSGYVNPNYTGRIRLDIQGTGQLLFSVVINQLRLSDAGQYLCQAGDDSNSNKKNADLQVLKPEPELVYEDLRGSVTFHCALGPEVANVAKFLCRQSSGENCDVVVNTLGKRAPAFEGRILLNPQDKDGSFSVVITGLRKEDAGRYLCGAHSDGQLQEGSPIQAWQLFVNEESTIPRSPTVVKGVAGGSVAVLCPYNRKESKSIKYWCLWEGAQNGRCPLLVDSEGWVKAQYEGRLSLLEEPGNGTFTVILNQLTSRDAGFYWCLTNGDTLWRTTVEIKIIEGEPNLKVPGNVTAVLGETLKVPCHFPCKFSSYEKYWCKWNNTGCQALPSQDEGPSKAFVNCDENSRLVSLTLNLVTRADEGWYWCGVKQGHFYGETAAVYVAVEERKAAGSRDVSLAKADAAPDEKVLDSGFREIENKAIQDPRLFAEEKAVADTRDQADGSRASVDSGSSEEQGGSSRALVSTLVPLGLVLAVGAVAVGVARARHRKNVDRVSIRSYRTDISMSDFENSREFGANDNMGASSITQETSLGGKEEFVATTESTTETKEPKKAKRSSKEEAEMAYKDFLLQSSTVAAEAQDGPQEA</sequence>
<dbReference type="EMBL" id="S62403">
    <property type="protein sequence ID" value="AAB20203.1"/>
    <property type="molecule type" value="mRNA"/>
</dbReference>
<dbReference type="EMBL" id="S43449">
    <property type="protein sequence ID" value="AAB23176.1"/>
    <property type="molecule type" value="Genomic_DNA"/>
</dbReference>
<dbReference type="EMBL" id="S43437">
    <property type="protein sequence ID" value="AAB23176.1"/>
    <property type="status" value="JOINED"/>
    <property type="molecule type" value="Genomic_DNA"/>
</dbReference>
<dbReference type="EMBL" id="S43441">
    <property type="protein sequence ID" value="AAB23176.1"/>
    <property type="status" value="JOINED"/>
    <property type="molecule type" value="Genomic_DNA"/>
</dbReference>
<dbReference type="EMBL" id="S43442">
    <property type="protein sequence ID" value="AAB23176.1"/>
    <property type="status" value="JOINED"/>
    <property type="molecule type" value="Genomic_DNA"/>
</dbReference>
<dbReference type="EMBL" id="S43443">
    <property type="protein sequence ID" value="AAB23176.1"/>
    <property type="status" value="JOINED"/>
    <property type="molecule type" value="Genomic_DNA"/>
</dbReference>
<dbReference type="EMBL" id="S43444">
    <property type="protein sequence ID" value="AAB23176.1"/>
    <property type="status" value="JOINED"/>
    <property type="molecule type" value="Genomic_DNA"/>
</dbReference>
<dbReference type="EMBL" id="S43445">
    <property type="protein sequence ID" value="AAB23176.1"/>
    <property type="status" value="JOINED"/>
    <property type="molecule type" value="Genomic_DNA"/>
</dbReference>
<dbReference type="EMBL" id="S43446">
    <property type="protein sequence ID" value="AAB23176.1"/>
    <property type="status" value="JOINED"/>
    <property type="molecule type" value="Genomic_DNA"/>
</dbReference>
<dbReference type="EMBL" id="S43447">
    <property type="protein sequence ID" value="AAB23176.1"/>
    <property type="status" value="JOINED"/>
    <property type="molecule type" value="Genomic_DNA"/>
</dbReference>
<dbReference type="EMBL" id="S43448">
    <property type="protein sequence ID" value="AAB23176.1"/>
    <property type="status" value="JOINED"/>
    <property type="molecule type" value="Genomic_DNA"/>
</dbReference>
<dbReference type="EMBL" id="AF272149">
    <property type="protein sequence ID" value="AAN65630.1"/>
    <property type="molecule type" value="mRNA"/>
</dbReference>
<dbReference type="EMBL" id="CR749533">
    <property type="protein sequence ID" value="CAH18339.1"/>
    <property type="molecule type" value="mRNA"/>
</dbReference>
<dbReference type="EMBL" id="M24559">
    <property type="protein sequence ID" value="AAA36102.1"/>
    <property type="molecule type" value="mRNA"/>
</dbReference>
<dbReference type="CCDS" id="CCDS1474.1"/>
<dbReference type="PIR" id="A46537">
    <property type="entry name" value="QRHUGS"/>
</dbReference>
<dbReference type="RefSeq" id="NP_002635.2">
    <property type="nucleotide sequence ID" value="NM_002644.3"/>
</dbReference>
<dbReference type="RefSeq" id="XP_011507931.1">
    <property type="nucleotide sequence ID" value="XM_011509629.2"/>
</dbReference>
<dbReference type="RefSeq" id="XP_054193006.1">
    <property type="nucleotide sequence ID" value="XM_054337031.1"/>
</dbReference>
<dbReference type="PDB" id="1XED">
    <property type="method" value="X-ray"/>
    <property type="resolution" value="1.90 A"/>
    <property type="chains" value="A/B/C/D/E/F=19-127"/>
</dbReference>
<dbReference type="PDB" id="2OCW">
    <property type="method" value="X-ray"/>
    <property type="chains" value="A=19-603"/>
</dbReference>
<dbReference type="PDB" id="3CHN">
    <property type="method" value="Other"/>
    <property type="resolution" value="1.00 A"/>
    <property type="chains" value="J=353-458, S=19-603"/>
</dbReference>
<dbReference type="PDB" id="3CM9">
    <property type="method" value="Other"/>
    <property type="resolution" value="1.00 A"/>
    <property type="chains" value="J=353-458, S=19-603"/>
</dbReference>
<dbReference type="PDB" id="5D4K">
    <property type="method" value="X-ray"/>
    <property type="resolution" value="2.60 A"/>
    <property type="chains" value="A/B=19-565"/>
</dbReference>
<dbReference type="PDB" id="6KXS">
    <property type="method" value="EM"/>
    <property type="resolution" value="3.40 A"/>
    <property type="chains" value="P=19-565"/>
</dbReference>
<dbReference type="PDB" id="6LX3">
    <property type="method" value="EM"/>
    <property type="resolution" value="3.15 A"/>
    <property type="chains" value="P=1-565"/>
</dbReference>
<dbReference type="PDB" id="6LXW">
    <property type="method" value="EM"/>
    <property type="resolution" value="3.27 A"/>
    <property type="chains" value="P=1-565"/>
</dbReference>
<dbReference type="PDB" id="6UE7">
    <property type="method" value="EM"/>
    <property type="resolution" value="2.90 A"/>
    <property type="chains" value="C=19-603"/>
</dbReference>
<dbReference type="PDB" id="6UE8">
    <property type="method" value="EM"/>
    <property type="resolution" value="3.00 A"/>
    <property type="chains" value="C=19-603"/>
</dbReference>
<dbReference type="PDB" id="6UE9">
    <property type="method" value="EM"/>
    <property type="resolution" value="2.90 A"/>
    <property type="chains" value="C=19-603"/>
</dbReference>
<dbReference type="PDB" id="6UEA">
    <property type="method" value="EM"/>
    <property type="resolution" value="3.00 A"/>
    <property type="chains" value="C=19-603"/>
</dbReference>
<dbReference type="PDB" id="7K0C">
    <property type="method" value="EM"/>
    <property type="resolution" value="3.30 A"/>
    <property type="chains" value="C=19-603"/>
</dbReference>
<dbReference type="PDB" id="7YSG">
    <property type="method" value="EM"/>
    <property type="resolution" value="3.18 A"/>
    <property type="chains" value="P=19-559"/>
</dbReference>
<dbReference type="PDB" id="8SKU">
    <property type="method" value="EM"/>
    <property type="resolution" value="3.20 A"/>
    <property type="chains" value="E=19-565"/>
</dbReference>
<dbReference type="PDB" id="8SKV">
    <property type="method" value="EM"/>
    <property type="resolution" value="3.10 A"/>
    <property type="chains" value="E=19-565"/>
</dbReference>
<dbReference type="PDBsum" id="1XED"/>
<dbReference type="PDBsum" id="2OCW"/>
<dbReference type="PDBsum" id="3CHN"/>
<dbReference type="PDBsum" id="3CM9"/>
<dbReference type="PDBsum" id="5D4K"/>
<dbReference type="PDBsum" id="6KXS"/>
<dbReference type="PDBsum" id="6LX3"/>
<dbReference type="PDBsum" id="6LXW"/>
<dbReference type="PDBsum" id="6UE7"/>
<dbReference type="PDBsum" id="6UE8"/>
<dbReference type="PDBsum" id="6UE9"/>
<dbReference type="PDBsum" id="6UEA"/>
<dbReference type="PDBsum" id="7K0C"/>
<dbReference type="PDBsum" id="7YSG"/>
<dbReference type="PDBsum" id="8SKU"/>
<dbReference type="PDBsum" id="8SKV"/>
<dbReference type="EMDB" id="EMD-0782"/>
<dbReference type="EMDB" id="EMD-20749"/>
<dbReference type="EMDB" id="EMD-20750"/>
<dbReference type="EMDB" id="EMD-20751"/>
<dbReference type="EMDB" id="EMD-20752"/>
<dbReference type="EMDB" id="EMD-22591"/>
<dbReference type="EMDB" id="EMD-30004"/>
<dbReference type="EMDB" id="EMD-30008"/>
<dbReference type="EMDB" id="EMD-34074"/>
<dbReference type="EMDB" id="EMD-40567"/>
<dbReference type="EMDB" id="EMD-40568"/>
<dbReference type="SMR" id="P01833"/>
<dbReference type="BioGRID" id="111302">
    <property type="interactions" value="168"/>
</dbReference>
<dbReference type="FunCoup" id="P01833">
    <property type="interactions" value="407"/>
</dbReference>
<dbReference type="IntAct" id="P01833">
    <property type="interactions" value="72"/>
</dbReference>
<dbReference type="MINT" id="P01833"/>
<dbReference type="STRING" id="9606.ENSP00000348888"/>
<dbReference type="ChEMBL" id="CHEMBL4295691"/>
<dbReference type="TCDB" id="8.A.218.1.7">
    <property type="family name" value="the triggering receptor expressed on myeloid cells 2 (trem2) family"/>
</dbReference>
<dbReference type="GlyConnect" id="550">
    <property type="glycosylation" value="182 N-Linked glycans (7 sites), 1 O-GlcNAc glycan (1 site), 7 O-Linked glycans (5 sites)"/>
</dbReference>
<dbReference type="GlyCosmos" id="P01833">
    <property type="glycosylation" value="11 sites, 155 glycans"/>
</dbReference>
<dbReference type="GlyGen" id="P01833">
    <property type="glycosylation" value="13 sites, 317 N-linked glycans (8 sites), 5 O-linked glycans (5 sites)"/>
</dbReference>
<dbReference type="iPTMnet" id="P01833"/>
<dbReference type="PhosphoSitePlus" id="P01833"/>
<dbReference type="BioMuta" id="PIGR"/>
<dbReference type="DMDM" id="150421625"/>
<dbReference type="CPTAC" id="CPTAC-685"/>
<dbReference type="jPOST" id="P01833"/>
<dbReference type="MassIVE" id="P01833"/>
<dbReference type="PaxDb" id="9606-ENSP00000348888"/>
<dbReference type="PeptideAtlas" id="P01833"/>
<dbReference type="PRIDE" id="P01833"/>
<dbReference type="ProteomicsDB" id="51489"/>
<dbReference type="Pumba" id="P01833"/>
<dbReference type="ABCD" id="P01833">
    <property type="antibodies" value="20 sequenced antibodies"/>
</dbReference>
<dbReference type="Antibodypedia" id="1594">
    <property type="antibodies" value="540 antibodies from 35 providers"/>
</dbReference>
<dbReference type="DNASU" id="5284"/>
<dbReference type="Ensembl" id="ENST00000356495.5">
    <property type="protein sequence ID" value="ENSP00000348888.4"/>
    <property type="gene ID" value="ENSG00000162896.6"/>
</dbReference>
<dbReference type="GeneID" id="5284"/>
<dbReference type="KEGG" id="hsa:5284"/>
<dbReference type="MANE-Select" id="ENST00000356495.5">
    <property type="protein sequence ID" value="ENSP00000348888.4"/>
    <property type="RefSeq nucleotide sequence ID" value="NM_002644.4"/>
    <property type="RefSeq protein sequence ID" value="NP_002635.2"/>
</dbReference>
<dbReference type="UCSC" id="uc001hez.4">
    <property type="organism name" value="human"/>
</dbReference>
<dbReference type="AGR" id="HGNC:8968"/>
<dbReference type="CTD" id="5284"/>
<dbReference type="DisGeNET" id="5284"/>
<dbReference type="GeneCards" id="PIGR"/>
<dbReference type="HGNC" id="HGNC:8968">
    <property type="gene designation" value="PIGR"/>
</dbReference>
<dbReference type="HPA" id="ENSG00000162896">
    <property type="expression patterns" value="Tissue enhanced (intestine, salivary gland)"/>
</dbReference>
<dbReference type="MalaCards" id="PIGR"/>
<dbReference type="MIM" id="173880">
    <property type="type" value="gene"/>
</dbReference>
<dbReference type="neXtProt" id="NX_P01833"/>
<dbReference type="OpenTargets" id="ENSG00000162896"/>
<dbReference type="PharmGKB" id="PA33300"/>
<dbReference type="VEuPathDB" id="HostDB:ENSG00000162896"/>
<dbReference type="eggNOG" id="ENOG502QPKT">
    <property type="taxonomic scope" value="Eukaryota"/>
</dbReference>
<dbReference type="GeneTree" id="ENSGT00940000161667"/>
<dbReference type="HOGENOM" id="CLU_020923_0_0_1"/>
<dbReference type="InParanoid" id="P01833"/>
<dbReference type="OMA" id="IKCYYPA"/>
<dbReference type="OrthoDB" id="6157407at2759"/>
<dbReference type="PAN-GO" id="P01833">
    <property type="GO annotations" value="3 GO annotations based on evolutionary models"/>
</dbReference>
<dbReference type="PhylomeDB" id="P01833"/>
<dbReference type="TreeFam" id="TF334441"/>
<dbReference type="PathwayCommons" id="P01833"/>
<dbReference type="Reactome" id="R-HSA-6798695">
    <property type="pathway name" value="Neutrophil degranulation"/>
</dbReference>
<dbReference type="SignaLink" id="P01833"/>
<dbReference type="BioGRID-ORCS" id="5284">
    <property type="hits" value="12 hits in 1147 CRISPR screens"/>
</dbReference>
<dbReference type="ChiTaRS" id="PIGR">
    <property type="organism name" value="human"/>
</dbReference>
<dbReference type="EvolutionaryTrace" id="P01833"/>
<dbReference type="GeneWiki" id="Polymeric_immunoglobulin_receptor"/>
<dbReference type="GenomeRNAi" id="5284"/>
<dbReference type="Pharos" id="P01833">
    <property type="development level" value="Tbio"/>
</dbReference>
<dbReference type="PRO" id="PR:P01833"/>
<dbReference type="Proteomes" id="UP000005640">
    <property type="component" value="Chromosome 1"/>
</dbReference>
<dbReference type="RNAct" id="P01833">
    <property type="molecule type" value="protein"/>
</dbReference>
<dbReference type="Bgee" id="ENSG00000162896">
    <property type="expression patterns" value="Expressed in parotid gland and 141 other cell types or tissues"/>
</dbReference>
<dbReference type="GO" id="GO:0035577">
    <property type="term" value="C:azurophil granule membrane"/>
    <property type="evidence" value="ECO:0000304"/>
    <property type="project" value="Reactome"/>
</dbReference>
<dbReference type="GO" id="GO:0070062">
    <property type="term" value="C:extracellular exosome"/>
    <property type="evidence" value="ECO:0007005"/>
    <property type="project" value="UniProtKB"/>
</dbReference>
<dbReference type="GO" id="GO:0005615">
    <property type="term" value="C:extracellular space"/>
    <property type="evidence" value="ECO:0000314"/>
    <property type="project" value="UniProtKB"/>
</dbReference>
<dbReference type="GO" id="GO:0005886">
    <property type="term" value="C:plasma membrane"/>
    <property type="evidence" value="ECO:0000314"/>
    <property type="project" value="UniProtKB"/>
</dbReference>
<dbReference type="GO" id="GO:0043235">
    <property type="term" value="C:receptor complex"/>
    <property type="evidence" value="ECO:0000314"/>
    <property type="project" value="MGI"/>
</dbReference>
<dbReference type="GO" id="GO:0071751">
    <property type="term" value="C:secretory IgA immunoglobulin complex"/>
    <property type="evidence" value="ECO:0000314"/>
    <property type="project" value="UniProtKB"/>
</dbReference>
<dbReference type="GO" id="GO:0001790">
    <property type="term" value="F:polymeric immunoglobulin binding"/>
    <property type="evidence" value="ECO:0000314"/>
    <property type="project" value="UniProtKB"/>
</dbReference>
<dbReference type="GO" id="GO:0001792">
    <property type="term" value="F:polymeric immunoglobulin receptor activity"/>
    <property type="evidence" value="ECO:0000314"/>
    <property type="project" value="UniProtKB"/>
</dbReference>
<dbReference type="GO" id="GO:0004888">
    <property type="term" value="F:transmembrane signaling receptor activity"/>
    <property type="evidence" value="ECO:0000318"/>
    <property type="project" value="GO_Central"/>
</dbReference>
<dbReference type="GO" id="GO:0001580">
    <property type="term" value="P:detection of chemical stimulus involved in sensory perception of bitter taste"/>
    <property type="evidence" value="ECO:0000314"/>
    <property type="project" value="UniProtKB"/>
</dbReference>
<dbReference type="GO" id="GO:0007173">
    <property type="term" value="P:epidermal growth factor receptor signaling pathway"/>
    <property type="evidence" value="ECO:0000314"/>
    <property type="project" value="UniProtKB"/>
</dbReference>
<dbReference type="GO" id="GO:0038093">
    <property type="term" value="P:Fc receptor signaling pathway"/>
    <property type="evidence" value="ECO:0000314"/>
    <property type="project" value="UniProtKB"/>
</dbReference>
<dbReference type="GO" id="GO:0002415">
    <property type="term" value="P:immunoglobulin transcytosis in epithelial cells mediated by polymeric immunoglobulin receptor"/>
    <property type="evidence" value="ECO:0000314"/>
    <property type="project" value="UniProtKB"/>
</dbReference>
<dbReference type="GO" id="GO:0043113">
    <property type="term" value="P:receptor clustering"/>
    <property type="evidence" value="ECO:0000314"/>
    <property type="project" value="UniProtKB"/>
</dbReference>
<dbReference type="GO" id="GO:0007165">
    <property type="term" value="P:signal transduction"/>
    <property type="evidence" value="ECO:0000318"/>
    <property type="project" value="GO_Central"/>
</dbReference>
<dbReference type="CDD" id="cd05716">
    <property type="entry name" value="IgV_pIgR_like"/>
    <property type="match status" value="5"/>
</dbReference>
<dbReference type="FunFam" id="2.60.40.10:FF:001340">
    <property type="entry name" value="Polymeric immunoglobulin receptor"/>
    <property type="match status" value="4"/>
</dbReference>
<dbReference type="FunFam" id="2.60.40.10:FF:002327">
    <property type="entry name" value="Polymeric immunoglobulin receptor"/>
    <property type="match status" value="1"/>
</dbReference>
<dbReference type="Gene3D" id="2.60.40.10">
    <property type="entry name" value="Immunoglobulins"/>
    <property type="match status" value="5"/>
</dbReference>
<dbReference type="InterPro" id="IPR050671">
    <property type="entry name" value="CD300_family_receptors"/>
</dbReference>
<dbReference type="InterPro" id="IPR007110">
    <property type="entry name" value="Ig-like_dom"/>
</dbReference>
<dbReference type="InterPro" id="IPR036179">
    <property type="entry name" value="Ig-like_dom_sf"/>
</dbReference>
<dbReference type="InterPro" id="IPR013783">
    <property type="entry name" value="Ig-like_fold"/>
</dbReference>
<dbReference type="InterPro" id="IPR003599">
    <property type="entry name" value="Ig_sub"/>
</dbReference>
<dbReference type="InterPro" id="IPR013106">
    <property type="entry name" value="Ig_V-set"/>
</dbReference>
<dbReference type="PANTHER" id="PTHR11860:SF82">
    <property type="entry name" value="POLYMERIC IMMUNOGLOBULIN RECEPTOR"/>
    <property type="match status" value="1"/>
</dbReference>
<dbReference type="PANTHER" id="PTHR11860">
    <property type="entry name" value="POLYMERIC-IMMUNOGLOBULIN RECEPTOR"/>
    <property type="match status" value="1"/>
</dbReference>
<dbReference type="Pfam" id="PF07686">
    <property type="entry name" value="V-set"/>
    <property type="match status" value="5"/>
</dbReference>
<dbReference type="SMART" id="SM00409">
    <property type="entry name" value="IG"/>
    <property type="match status" value="5"/>
</dbReference>
<dbReference type="SMART" id="SM00406">
    <property type="entry name" value="IGv"/>
    <property type="match status" value="4"/>
</dbReference>
<dbReference type="SUPFAM" id="SSF48726">
    <property type="entry name" value="Immunoglobulin"/>
    <property type="match status" value="5"/>
</dbReference>
<dbReference type="PROSITE" id="PS50835">
    <property type="entry name" value="IG_LIKE"/>
    <property type="match status" value="2"/>
</dbReference>
<name>PIGR_HUMAN</name>
<proteinExistence type="evidence at protein level"/>
<feature type="signal peptide" evidence="16 24">
    <location>
        <begin position="1"/>
        <end position="18"/>
    </location>
</feature>
<feature type="chain" id="PRO_0000014900" description="Polymeric immunoglobulin receptor">
    <location>
        <begin position="19"/>
        <end position="764"/>
    </location>
</feature>
<feature type="chain" id="PRO_0000014901" description="Secretory component">
    <location>
        <begin position="19"/>
        <end position="603"/>
    </location>
</feature>
<feature type="topological domain" description="Extracellular" evidence="3">
    <location>
        <begin position="19"/>
        <end position="638"/>
    </location>
</feature>
<feature type="transmembrane region" description="Helical" evidence="3">
    <location>
        <begin position="639"/>
        <end position="661"/>
    </location>
</feature>
<feature type="topological domain" description="Cytoplasmic" evidence="3">
    <location>
        <begin position="662"/>
        <end position="764"/>
    </location>
</feature>
<feature type="domain" description="Ig-like V-type 1; required for binding to polymeric IgA and IgM" evidence="6 10">
    <location>
        <begin position="19"/>
        <end position="120"/>
    </location>
</feature>
<feature type="domain" description="Ig-like V-type 2">
    <location>
        <begin position="145"/>
        <end position="237"/>
    </location>
</feature>
<feature type="domain" description="Ig-like V-type 3">
    <location>
        <begin position="250"/>
        <end position="352"/>
    </location>
</feature>
<feature type="domain" description="Ig-like V-type 4">
    <location>
        <begin position="364"/>
        <end position="458"/>
    </location>
</feature>
<feature type="domain" description="Ig-like V-type 5">
    <location>
        <begin position="462"/>
        <end position="561"/>
    </location>
</feature>
<feature type="region of interest" description="Disordered" evidence="5">
    <location>
        <begin position="609"/>
        <end position="637"/>
    </location>
</feature>
<feature type="region of interest" description="Disordered" evidence="5">
    <location>
        <begin position="717"/>
        <end position="738"/>
    </location>
</feature>
<feature type="compositionally biased region" description="Basic and acidic residues" evidence="5">
    <location>
        <begin position="609"/>
        <end position="619"/>
    </location>
</feature>
<feature type="compositionally biased region" description="Low complexity" evidence="5">
    <location>
        <begin position="627"/>
        <end position="637"/>
    </location>
</feature>
<feature type="compositionally biased region" description="Basic and acidic residues" evidence="5">
    <location>
        <begin position="723"/>
        <end position="738"/>
    </location>
</feature>
<feature type="modified residue" description="Phosphoserine" evidence="2">
    <location>
        <position position="673"/>
    </location>
</feature>
<feature type="modified residue" description="Phosphoserine" evidence="1">
    <location>
        <position position="682"/>
    </location>
</feature>
<feature type="modified residue" description="Phosphoserine" evidence="2">
    <location>
        <position position="689"/>
    </location>
</feature>
<feature type="modified residue" description="Phosphoserine" evidence="1">
    <location>
        <position position="735"/>
    </location>
</feature>
<feature type="glycosylation site" description="N-linked (GlcNAc...) asparagine" evidence="9 13 17 24">
    <location>
        <position position="83"/>
    </location>
</feature>
<feature type="glycosylation site" description="N-linked (GlcNAc...) asparagine" evidence="9 11 13 17 24">
    <location>
        <position position="90"/>
    </location>
</feature>
<feature type="glycosylation site" description="N-linked (GlcNAc...) asparagine" evidence="17 24">
    <location>
        <position position="135"/>
    </location>
</feature>
<feature type="glycosylation site" description="N-linked (GlcNAc...) asparagine" evidence="13 17 24">
    <location>
        <position position="186"/>
    </location>
</feature>
<feature type="glycosylation site" description="N-linked (GlcNAc...) asparagine" evidence="9 11 13 17 20 24">
    <location>
        <position position="421"/>
    </location>
</feature>
<feature type="glycosylation site" description="N-linked (GlcNAc...) (complex) asparagine" evidence="9 11 13 17 19 20 24">
    <location>
        <position position="469"/>
    </location>
</feature>
<feature type="glycosylation site" description="N-linked (GlcNAc...) asparagine" evidence="13 17 24">
    <location>
        <position position="499"/>
    </location>
</feature>
<feature type="disulfide bond" evidence="4 23 24">
    <location>
        <begin position="40"/>
        <end position="110"/>
    </location>
</feature>
<feature type="disulfide bond" evidence="4 23 24">
    <location>
        <begin position="56"/>
        <end position="64"/>
    </location>
</feature>
<feature type="disulfide bond" evidence="4 23 24">
    <location>
        <begin position="152"/>
        <end position="220"/>
    </location>
</feature>
<feature type="disulfide bond" evidence="4 23 24">
    <location>
        <begin position="257"/>
        <end position="325"/>
    </location>
</feature>
<feature type="disulfide bond" evidence="4 23 24">
    <location>
        <begin position="271"/>
        <end position="279"/>
    </location>
</feature>
<feature type="disulfide bond" evidence="4 23 24">
    <location>
        <begin position="371"/>
        <end position="441"/>
    </location>
</feature>
<feature type="disulfide bond" evidence="4 23 24">
    <location>
        <begin position="385"/>
        <end position="395"/>
    </location>
</feature>
<feature type="disulfide bond" evidence="4 23 24">
    <location>
        <begin position="482"/>
        <end position="544"/>
    </location>
</feature>
<feature type="disulfide bond" evidence="4 24">
    <location>
        <begin position="486"/>
        <end position="520"/>
    </location>
</feature>
<feature type="disulfide bond" evidence="4 23 24">
    <location>
        <begin position="496"/>
        <end position="503"/>
    </location>
</feature>
<feature type="disulfide bond" description="Interchain (with C-179 of IGHA2/constant region of IgA2 heavy chain)" evidence="22 25">
    <location>
        <position position="503"/>
    </location>
</feature>
<feature type="sequence variant" id="VAR_025283" description="In dbSNP:rs2275531." evidence="8 14 15 16 21 24">
    <original>G</original>
    <variation>S</variation>
    <location>
        <position position="365"/>
    </location>
</feature>
<feature type="sequence variant" id="VAR_032822" description="In dbSNP:rs7542760.">
    <original>T</original>
    <variation>I</variation>
    <location>
        <position position="555"/>
    </location>
</feature>
<feature type="sequence variant" id="VAR_003920" description="In dbSNP:rs291102.">
    <original>A</original>
    <variation>V</variation>
    <location>
        <position position="580"/>
    </location>
</feature>
<feature type="mutagenesis site" description="Disrupts the interaction with pentameric IgM; when associated with S-49." evidence="23">
    <original>V</original>
    <variation>N</variation>
    <location>
        <position position="47"/>
    </location>
</feature>
<feature type="mutagenesis site" description="Disrupts the interaction with pentameric IgM; when associated with N-47." evidence="23">
    <original>R</original>
    <variation>S</variation>
    <location>
        <position position="49"/>
    </location>
</feature>
<feature type="mutagenesis site" description="Disrupts the interaction with pentameric IgM; when associated with T-119." evidence="23">
    <original>R</original>
    <variation>N</variation>
    <location>
        <position position="117"/>
    </location>
</feature>
<feature type="mutagenesis site" description="Disrupts the interaction with pentameric IgM; when associated with N-117." evidence="23">
    <original>L</original>
    <variation>T</variation>
    <location>
        <position position="119"/>
    </location>
</feature>
<feature type="sequence conflict" description="In Ref. 6; AA sequence and 7; AA sequence." evidence="27" ref="6 7">
    <original>D</original>
    <variation>Q</variation>
    <location>
        <position position="136"/>
    </location>
</feature>
<feature type="sequence conflict" description="In Ref. 6; AA sequence and 7; AA sequence." evidence="27" ref="6 7">
    <original>N</original>
    <variation>D</variation>
    <location>
        <position position="158"/>
    </location>
</feature>
<feature type="sequence conflict" description="In Ref. 6; AA sequence and 7; AA sequence." evidence="27" ref="6 7">
    <original>NQ</original>
    <variation>DE</variation>
    <location>
        <begin position="208"/>
        <end position="209"/>
    </location>
</feature>
<feature type="sequence conflict" description="In Ref. 6; AA sequence and 7; AA sequence." evidence="27" ref="6 7">
    <location>
        <position position="229"/>
    </location>
</feature>
<feature type="sequence conflict" description="In Ref. 6; AA sequence and 7; AA sequence." evidence="27" ref="6 7">
    <original>D</original>
    <variation>N</variation>
    <location>
        <position position="234"/>
    </location>
</feature>
<feature type="sequence conflict" description="In Ref. 6; AA sequence and 7; AA sequence." evidence="27" ref="6 7">
    <original>E</original>
    <variation>Q</variation>
    <location>
        <position position="241"/>
    </location>
</feature>
<feature type="sequence conflict" description="In Ref. 6; AA sequence and 7; AA sequence." evidence="27" ref="6 7">
    <original>E</original>
    <variation>Q</variation>
    <location>
        <position position="262"/>
    </location>
</feature>
<feature type="sequence conflict" description="In Ref. 6; AA sequence and 7; AA sequence." evidence="27" ref="6 7">
    <original>D</original>
    <variation>N</variation>
    <location>
        <position position="280"/>
    </location>
</feature>
<feature type="sequence conflict" description="In Ref. 6; AA sequence and 7; AA sequence." evidence="27" ref="6 7">
    <original>N</original>
    <variation>D</variation>
    <location>
        <position position="392"/>
    </location>
</feature>
<feature type="sequence conflict" description="In Ref. 6; AA sequence and 7; AA sequence." evidence="27" ref="6 7">
    <original>N</original>
    <variation>D</variation>
    <location>
        <position position="500"/>
    </location>
</feature>
<feature type="strand" evidence="28">
    <location>
        <begin position="26"/>
        <end position="31"/>
    </location>
</feature>
<feature type="strand" evidence="28">
    <location>
        <begin position="36"/>
        <end position="41"/>
    </location>
</feature>
<feature type="helix" evidence="28">
    <location>
        <begin position="46"/>
        <end position="50"/>
    </location>
</feature>
<feature type="strand" evidence="28">
    <location>
        <begin position="53"/>
        <end position="57"/>
    </location>
</feature>
<feature type="strand" evidence="28">
    <location>
        <begin position="60"/>
        <end position="62"/>
    </location>
</feature>
<feature type="strand" evidence="28">
    <location>
        <begin position="65"/>
        <end position="72"/>
    </location>
</feature>
<feature type="turn" evidence="28">
    <location>
        <begin position="76"/>
        <end position="81"/>
    </location>
</feature>
<feature type="strand" evidence="28">
    <location>
        <begin position="82"/>
        <end position="87"/>
    </location>
</feature>
<feature type="turn" evidence="28">
    <location>
        <begin position="88"/>
        <end position="91"/>
    </location>
</feature>
<feature type="strand" evidence="28">
    <location>
        <begin position="92"/>
        <end position="97"/>
    </location>
</feature>
<feature type="helix" evidence="28">
    <location>
        <begin position="102"/>
        <end position="104"/>
    </location>
</feature>
<feature type="strand" evidence="28">
    <location>
        <begin position="106"/>
        <end position="113"/>
    </location>
</feature>
<feature type="helix" evidence="28">
    <location>
        <begin position="115"/>
        <end position="117"/>
    </location>
</feature>
<feature type="strand" evidence="28">
    <location>
        <begin position="120"/>
        <end position="127"/>
    </location>
</feature>
<feature type="strand" evidence="29">
    <location>
        <begin position="136"/>
        <end position="143"/>
    </location>
</feature>
<feature type="strand" evidence="34">
    <location>
        <begin position="144"/>
        <end position="146"/>
    </location>
</feature>
<feature type="strand" evidence="29">
    <location>
        <begin position="148"/>
        <end position="153"/>
    </location>
</feature>
<feature type="helix" evidence="29">
    <location>
        <begin position="156"/>
        <end position="158"/>
    </location>
</feature>
<feature type="strand" evidence="31">
    <location>
        <begin position="159"/>
        <end position="161"/>
    </location>
</feature>
<feature type="strand" evidence="29">
    <location>
        <begin position="163"/>
        <end position="178"/>
    </location>
</feature>
<feature type="strand" evidence="31">
    <location>
        <begin position="179"/>
        <end position="181"/>
    </location>
</feature>
<feature type="turn" evidence="29">
    <location>
        <begin position="185"/>
        <end position="189"/>
    </location>
</feature>
<feature type="strand" evidence="29">
    <location>
        <begin position="190"/>
        <end position="195"/>
    </location>
</feature>
<feature type="strand" evidence="29">
    <location>
        <begin position="201"/>
        <end position="207"/>
    </location>
</feature>
<feature type="helix" evidence="29">
    <location>
        <begin position="212"/>
        <end position="214"/>
    </location>
</feature>
<feature type="strand" evidence="29">
    <location>
        <begin position="216"/>
        <end position="222"/>
    </location>
</feature>
<feature type="strand" evidence="29">
    <location>
        <begin position="224"/>
        <end position="227"/>
    </location>
</feature>
<feature type="strand" evidence="29">
    <location>
        <begin position="229"/>
        <end position="238"/>
    </location>
</feature>
<feature type="strand" evidence="29">
    <location>
        <begin position="243"/>
        <end position="248"/>
    </location>
</feature>
<feature type="strand" evidence="29">
    <location>
        <begin position="253"/>
        <end position="257"/>
    </location>
</feature>
<feature type="turn" evidence="29">
    <location>
        <begin position="262"/>
        <end position="265"/>
    </location>
</feature>
<feature type="strand" evidence="29">
    <location>
        <begin position="268"/>
        <end position="273"/>
    </location>
</feature>
<feature type="strand" evidence="29">
    <location>
        <begin position="275"/>
        <end position="277"/>
    </location>
</feature>
<feature type="strand" evidence="29">
    <location>
        <begin position="279"/>
        <end position="287"/>
    </location>
</feature>
<feature type="helix" evidence="29">
    <location>
        <begin position="291"/>
        <end position="293"/>
    </location>
</feature>
<feature type="strand" evidence="29">
    <location>
        <begin position="296"/>
        <end position="299"/>
    </location>
</feature>
<feature type="strand" evidence="32">
    <location>
        <begin position="304"/>
        <end position="306"/>
    </location>
</feature>
<feature type="strand" evidence="29">
    <location>
        <begin position="308"/>
        <end position="312"/>
    </location>
</feature>
<feature type="helix" evidence="29">
    <location>
        <begin position="317"/>
        <end position="319"/>
    </location>
</feature>
<feature type="strand" evidence="29">
    <location>
        <begin position="321"/>
        <end position="327"/>
    </location>
</feature>
<feature type="strand" evidence="36">
    <location>
        <begin position="329"/>
        <end position="332"/>
    </location>
</feature>
<feature type="strand" evidence="35">
    <location>
        <begin position="335"/>
        <end position="337"/>
    </location>
</feature>
<feature type="strand" evidence="29">
    <location>
        <begin position="339"/>
        <end position="347"/>
    </location>
</feature>
<feature type="strand" evidence="29">
    <location>
        <begin position="357"/>
        <end position="361"/>
    </location>
</feature>
<feature type="strand" evidence="29">
    <location>
        <begin position="365"/>
        <end position="372"/>
    </location>
</feature>
<feature type="helix" evidence="29">
    <location>
        <begin position="375"/>
        <end position="377"/>
    </location>
</feature>
<feature type="strand" evidence="29">
    <location>
        <begin position="383"/>
        <end position="386"/>
    </location>
</feature>
<feature type="turn" evidence="29">
    <location>
        <begin position="390"/>
        <end position="392"/>
    </location>
</feature>
<feature type="strand" evidence="29">
    <location>
        <begin position="397"/>
        <end position="400"/>
    </location>
</feature>
<feature type="turn" evidence="30">
    <location>
        <begin position="401"/>
        <end position="403"/>
    </location>
</feature>
<feature type="helix" evidence="29">
    <location>
        <begin position="407"/>
        <end position="409"/>
    </location>
</feature>
<feature type="turn" evidence="29">
    <location>
        <begin position="410"/>
        <end position="412"/>
    </location>
</feature>
<feature type="strand" evidence="29">
    <location>
        <begin position="413"/>
        <end position="419"/>
    </location>
</feature>
<feature type="strand" evidence="29">
    <location>
        <begin position="421"/>
        <end position="430"/>
    </location>
</feature>
<feature type="helix" evidence="29">
    <location>
        <begin position="433"/>
        <end position="435"/>
    </location>
</feature>
<feature type="strand" evidence="29">
    <location>
        <begin position="437"/>
        <end position="442"/>
    </location>
</feature>
<feature type="strand" evidence="33">
    <location>
        <begin position="445"/>
        <end position="447"/>
    </location>
</feature>
<feature type="strand" evidence="29">
    <location>
        <begin position="451"/>
        <end position="457"/>
    </location>
</feature>
<feature type="strand" evidence="29">
    <location>
        <begin position="463"/>
        <end position="465"/>
    </location>
</feature>
<feature type="strand" evidence="29">
    <location>
        <begin position="468"/>
        <end position="473"/>
    </location>
</feature>
<feature type="strand" evidence="32">
    <location>
        <begin position="474"/>
        <end position="476"/>
    </location>
</feature>
<feature type="strand" evidence="29">
    <location>
        <begin position="478"/>
        <end position="484"/>
    </location>
</feature>
<feature type="turn" evidence="29">
    <location>
        <begin position="487"/>
        <end position="490"/>
    </location>
</feature>
<feature type="strand" evidence="29">
    <location>
        <begin position="491"/>
        <end position="497"/>
    </location>
</feature>
<feature type="strand" evidence="32">
    <location>
        <begin position="502"/>
        <end position="505"/>
    </location>
</feature>
<feature type="strand" evidence="29">
    <location>
        <begin position="508"/>
        <end position="510"/>
    </location>
</feature>
<feature type="strand" evidence="35">
    <location>
        <begin position="511"/>
        <end position="513"/>
    </location>
</feature>
<feature type="strand" evidence="29">
    <location>
        <begin position="516"/>
        <end position="519"/>
    </location>
</feature>
<feature type="strand" evidence="29">
    <location>
        <begin position="521"/>
        <end position="523"/>
    </location>
</feature>
<feature type="strand" evidence="29">
    <location>
        <begin position="525"/>
        <end position="533"/>
    </location>
</feature>
<feature type="helix" evidence="29">
    <location>
        <begin position="536"/>
        <end position="538"/>
    </location>
</feature>
<feature type="strand" evidence="29">
    <location>
        <begin position="540"/>
        <end position="548"/>
    </location>
</feature>
<feature type="strand" evidence="29">
    <location>
        <begin position="551"/>
        <end position="565"/>
    </location>
</feature>
<keyword id="KW-0002">3D-structure</keyword>
<keyword id="KW-1003">Cell membrane</keyword>
<keyword id="KW-0903">Direct protein sequencing</keyword>
<keyword id="KW-1015">Disulfide bond</keyword>
<keyword id="KW-0325">Glycoprotein</keyword>
<keyword id="KW-0393">Immunoglobulin domain</keyword>
<keyword id="KW-0472">Membrane</keyword>
<keyword id="KW-0597">Phosphoprotein</keyword>
<keyword id="KW-1267">Proteomics identification</keyword>
<keyword id="KW-1185">Reference proteome</keyword>
<keyword id="KW-0677">Repeat</keyword>
<keyword id="KW-0964">Secreted</keyword>
<keyword id="KW-0732">Signal</keyword>
<keyword id="KW-0812">Transmembrane</keyword>
<keyword id="KW-1133">Transmembrane helix</keyword>
<evidence type="ECO:0000250" key="1">
    <source>
        <dbReference type="UniProtKB" id="O70570"/>
    </source>
</evidence>
<evidence type="ECO:0000250" key="2">
    <source>
        <dbReference type="UniProtKB" id="P15083"/>
    </source>
</evidence>
<evidence type="ECO:0000255" key="3"/>
<evidence type="ECO:0000255" key="4">
    <source>
        <dbReference type="PROSITE-ProRule" id="PRU00114"/>
    </source>
</evidence>
<evidence type="ECO:0000256" key="5">
    <source>
        <dbReference type="SAM" id="MobiDB-lite"/>
    </source>
</evidence>
<evidence type="ECO:0000269" key="6">
    <source>
    </source>
</evidence>
<evidence type="ECO:0000269" key="7">
    <source>
    </source>
</evidence>
<evidence type="ECO:0000269" key="8">
    <source>
    </source>
</evidence>
<evidence type="ECO:0000269" key="9">
    <source>
    </source>
</evidence>
<evidence type="ECO:0000269" key="10">
    <source>
    </source>
</evidence>
<evidence type="ECO:0000269" key="11">
    <source>
    </source>
</evidence>
<evidence type="ECO:0000269" key="12">
    <source>
    </source>
</evidence>
<evidence type="ECO:0000269" key="13">
    <source>
    </source>
</evidence>
<evidence type="ECO:0000269" key="14">
    <source>
    </source>
</evidence>
<evidence type="ECO:0000269" key="15">
    <source>
    </source>
</evidence>
<evidence type="ECO:0000269" key="16">
    <source>
    </source>
</evidence>
<evidence type="ECO:0000269" key="17">
    <source>
    </source>
</evidence>
<evidence type="ECO:0000269" key="18">
    <source>
    </source>
</evidence>
<evidence type="ECO:0000269" key="19">
    <source>
    </source>
</evidence>
<evidence type="ECO:0000269" key="20">
    <source>
    </source>
</evidence>
<evidence type="ECO:0000269" key="21">
    <source>
    </source>
</evidence>
<evidence type="ECO:0000269" key="22">
    <source>
    </source>
</evidence>
<evidence type="ECO:0000269" key="23">
    <source>
    </source>
</evidence>
<evidence type="ECO:0000269" key="24">
    <source>
    </source>
</evidence>
<evidence type="ECO:0000269" key="25">
    <source>
    </source>
</evidence>
<evidence type="ECO:0000269" key="26">
    <source>
    </source>
</evidence>
<evidence type="ECO:0000305" key="27"/>
<evidence type="ECO:0007829" key="28">
    <source>
        <dbReference type="PDB" id="1XED"/>
    </source>
</evidence>
<evidence type="ECO:0007829" key="29">
    <source>
        <dbReference type="PDB" id="5D4K"/>
    </source>
</evidence>
<evidence type="ECO:0007829" key="30">
    <source>
        <dbReference type="PDB" id="6LXW"/>
    </source>
</evidence>
<evidence type="ECO:0007829" key="31">
    <source>
        <dbReference type="PDB" id="6UE7"/>
    </source>
</evidence>
<evidence type="ECO:0007829" key="32">
    <source>
        <dbReference type="PDB" id="6UE8"/>
    </source>
</evidence>
<evidence type="ECO:0007829" key="33">
    <source>
        <dbReference type="PDB" id="6UE9"/>
    </source>
</evidence>
<evidence type="ECO:0007829" key="34">
    <source>
        <dbReference type="PDB" id="6UEA"/>
    </source>
</evidence>
<evidence type="ECO:0007829" key="35">
    <source>
        <dbReference type="PDB" id="7YSG"/>
    </source>
</evidence>
<evidence type="ECO:0007829" key="36">
    <source>
        <dbReference type="PDB" id="8SKV"/>
    </source>
</evidence>